<feature type="chain" id="PRO_0000219956" description="PqqA peptide cyclase">
    <location>
        <begin position="1"/>
        <end position="376"/>
    </location>
</feature>
<feature type="domain" description="Radical SAM core" evidence="2">
    <location>
        <begin position="4"/>
        <end position="219"/>
    </location>
</feature>
<feature type="binding site" evidence="1">
    <location>
        <position position="18"/>
    </location>
    <ligand>
        <name>[4Fe-4S] cluster</name>
        <dbReference type="ChEBI" id="CHEBI:49883"/>
        <note>4Fe-4S-S-AdoMet</note>
    </ligand>
</feature>
<feature type="binding site" evidence="1">
    <location>
        <position position="22"/>
    </location>
    <ligand>
        <name>[4Fe-4S] cluster</name>
        <dbReference type="ChEBI" id="CHEBI:49883"/>
        <note>4Fe-4S-S-AdoMet</note>
    </ligand>
</feature>
<feature type="binding site" evidence="1">
    <location>
        <position position="25"/>
    </location>
    <ligand>
        <name>[4Fe-4S] cluster</name>
        <dbReference type="ChEBI" id="CHEBI:49883"/>
        <note>4Fe-4S-S-AdoMet</note>
    </ligand>
</feature>
<accession>Q4UXI4</accession>
<reference key="1">
    <citation type="journal article" date="2005" name="Genome Res.">
        <title>Comparative and functional genomic analyses of the pathogenicity of phytopathogen Xanthomonas campestris pv. campestris.</title>
        <authorList>
            <person name="Qian W."/>
            <person name="Jia Y."/>
            <person name="Ren S.-X."/>
            <person name="He Y.-Q."/>
            <person name="Feng J.-X."/>
            <person name="Lu L.-F."/>
            <person name="Sun Q."/>
            <person name="Ying G."/>
            <person name="Tang D.-J."/>
            <person name="Tang H."/>
            <person name="Wu W."/>
            <person name="Hao P."/>
            <person name="Wang L."/>
            <person name="Jiang B.-L."/>
            <person name="Zeng S."/>
            <person name="Gu W.-Y."/>
            <person name="Lu G."/>
            <person name="Rong L."/>
            <person name="Tian Y."/>
            <person name="Yao Z."/>
            <person name="Fu G."/>
            <person name="Chen B."/>
            <person name="Fang R."/>
            <person name="Qiang B."/>
            <person name="Chen Z."/>
            <person name="Zhao G.-P."/>
            <person name="Tang J.-L."/>
            <person name="He C."/>
        </authorList>
    </citation>
    <scope>NUCLEOTIDE SEQUENCE [LARGE SCALE GENOMIC DNA]</scope>
    <source>
        <strain>8004</strain>
    </source>
</reference>
<sequence>MSTVPPPLSVLLELTHRCPLACPYCSNPIALAALREEMDTAGWRSLLEQAAEMGVLQAHFSGGEPMLRKDLPELVAHARALGLYSNLITSGVAGGEPMLDQLQAAGLEHVQLSVQDVDPAGADHIAGYRNSLSKKRAFAAAVRARGLPLTLNAVIHRHNAERVPGMIALALEWGAERIEVAHTQYYGWGLRNRAALMPSREQLAATIVAVETARRSLGDQLAIDFVTPDYYARQPKPCMGGWAQRFVNISPRGDVLPCHAAETIDGLQFDNLRDRSLADIWNHGEAFARFRGTAWMPEVCQGCPKREIDWGGCRCQALALAGDAATLDPVCERSPAHAGIRATAEREAASPAPDFVYRRPERPAAVAAEAAISDTE</sequence>
<proteinExistence type="inferred from homology"/>
<keyword id="KW-0004">4Fe-4S</keyword>
<keyword id="KW-0408">Iron</keyword>
<keyword id="KW-0411">Iron-sulfur</keyword>
<keyword id="KW-0479">Metal-binding</keyword>
<keyword id="KW-0560">Oxidoreductase</keyword>
<keyword id="KW-0884">PQQ biosynthesis</keyword>
<keyword id="KW-0949">S-adenosyl-L-methionine</keyword>
<protein>
    <recommendedName>
        <fullName evidence="1">PqqA peptide cyclase</fullName>
        <ecNumber evidence="1">1.21.98.4</ecNumber>
    </recommendedName>
    <alternativeName>
        <fullName evidence="1">Coenzyme PQQ synthesis protein E</fullName>
    </alternativeName>
    <alternativeName>
        <fullName evidence="1">Pyrroloquinoline quinone biosynthesis protein E</fullName>
    </alternativeName>
</protein>
<dbReference type="EC" id="1.21.98.4" evidence="1"/>
<dbReference type="EMBL" id="CP000050">
    <property type="protein sequence ID" value="AAY48239.1"/>
    <property type="molecule type" value="Genomic_DNA"/>
</dbReference>
<dbReference type="RefSeq" id="WP_011038063.1">
    <property type="nucleotide sequence ID" value="NZ_CP155948.1"/>
</dbReference>
<dbReference type="SMR" id="Q4UXI4"/>
<dbReference type="KEGG" id="xcb:XC_1169"/>
<dbReference type="HOGENOM" id="CLU_009273_4_7_6"/>
<dbReference type="UniPathway" id="UPA00539"/>
<dbReference type="Proteomes" id="UP000000420">
    <property type="component" value="Chromosome"/>
</dbReference>
<dbReference type="GO" id="GO:0051539">
    <property type="term" value="F:4 iron, 4 sulfur cluster binding"/>
    <property type="evidence" value="ECO:0007669"/>
    <property type="project" value="UniProtKB-KW"/>
</dbReference>
<dbReference type="GO" id="GO:0009975">
    <property type="term" value="F:cyclase activity"/>
    <property type="evidence" value="ECO:0007669"/>
    <property type="project" value="UniProtKB-UniRule"/>
</dbReference>
<dbReference type="GO" id="GO:0005506">
    <property type="term" value="F:iron ion binding"/>
    <property type="evidence" value="ECO:0007669"/>
    <property type="project" value="UniProtKB-UniRule"/>
</dbReference>
<dbReference type="GO" id="GO:0016491">
    <property type="term" value="F:oxidoreductase activity"/>
    <property type="evidence" value="ECO:0007669"/>
    <property type="project" value="UniProtKB-KW"/>
</dbReference>
<dbReference type="GO" id="GO:1904047">
    <property type="term" value="F:S-adenosyl-L-methionine binding"/>
    <property type="evidence" value="ECO:0007669"/>
    <property type="project" value="UniProtKB-UniRule"/>
</dbReference>
<dbReference type="GO" id="GO:0018189">
    <property type="term" value="P:pyrroloquinoline quinone biosynthetic process"/>
    <property type="evidence" value="ECO:0007669"/>
    <property type="project" value="UniProtKB-UniRule"/>
</dbReference>
<dbReference type="CDD" id="cd01335">
    <property type="entry name" value="Radical_SAM"/>
    <property type="match status" value="1"/>
</dbReference>
<dbReference type="CDD" id="cd21119">
    <property type="entry name" value="SPASM_PqqE"/>
    <property type="match status" value="1"/>
</dbReference>
<dbReference type="Gene3D" id="3.20.20.70">
    <property type="entry name" value="Aldolase class I"/>
    <property type="match status" value="1"/>
</dbReference>
<dbReference type="HAMAP" id="MF_00660">
    <property type="entry name" value="PqqE"/>
    <property type="match status" value="1"/>
</dbReference>
<dbReference type="InterPro" id="IPR023885">
    <property type="entry name" value="4Fe4S-binding_SPASM_dom"/>
</dbReference>
<dbReference type="InterPro" id="IPR013785">
    <property type="entry name" value="Aldolase_TIM"/>
</dbReference>
<dbReference type="InterPro" id="IPR011843">
    <property type="entry name" value="PQQ_synth_PqqE_bac"/>
</dbReference>
<dbReference type="InterPro" id="IPR017200">
    <property type="entry name" value="PqqE-like"/>
</dbReference>
<dbReference type="InterPro" id="IPR050377">
    <property type="entry name" value="Radical_SAM_PqqE_MftC-like"/>
</dbReference>
<dbReference type="InterPro" id="IPR007197">
    <property type="entry name" value="rSAM"/>
</dbReference>
<dbReference type="NCBIfam" id="TIGR02109">
    <property type="entry name" value="PQQ_syn_pqqE"/>
    <property type="match status" value="1"/>
</dbReference>
<dbReference type="NCBIfam" id="TIGR04085">
    <property type="entry name" value="rSAM_more_4Fe4S"/>
    <property type="match status" value="1"/>
</dbReference>
<dbReference type="PANTHER" id="PTHR11228:SF7">
    <property type="entry name" value="PQQA PEPTIDE CYCLASE"/>
    <property type="match status" value="1"/>
</dbReference>
<dbReference type="PANTHER" id="PTHR11228">
    <property type="entry name" value="RADICAL SAM DOMAIN PROTEIN"/>
    <property type="match status" value="1"/>
</dbReference>
<dbReference type="Pfam" id="PF04055">
    <property type="entry name" value="Radical_SAM"/>
    <property type="match status" value="1"/>
</dbReference>
<dbReference type="Pfam" id="PF13186">
    <property type="entry name" value="SPASM"/>
    <property type="match status" value="1"/>
</dbReference>
<dbReference type="PIRSF" id="PIRSF037420">
    <property type="entry name" value="PQQ_syn_pqqE"/>
    <property type="match status" value="1"/>
</dbReference>
<dbReference type="SFLD" id="SFLDF00280">
    <property type="entry name" value="coenzyme_PQQ_synthesis_protein"/>
    <property type="match status" value="1"/>
</dbReference>
<dbReference type="SFLD" id="SFLDS00029">
    <property type="entry name" value="Radical_SAM"/>
    <property type="match status" value="1"/>
</dbReference>
<dbReference type="SUPFAM" id="SSF102114">
    <property type="entry name" value="Radical SAM enzymes"/>
    <property type="match status" value="1"/>
</dbReference>
<dbReference type="PROSITE" id="PS51918">
    <property type="entry name" value="RADICAL_SAM"/>
    <property type="match status" value="1"/>
</dbReference>
<evidence type="ECO:0000255" key="1">
    <source>
        <dbReference type="HAMAP-Rule" id="MF_00660"/>
    </source>
</evidence>
<evidence type="ECO:0000255" key="2">
    <source>
        <dbReference type="PROSITE-ProRule" id="PRU01266"/>
    </source>
</evidence>
<gene>
    <name evidence="1" type="primary">pqqE</name>
    <name type="ordered locus">XC_1169</name>
</gene>
<name>PQQE_XANC8</name>
<organism>
    <name type="scientific">Xanthomonas campestris pv. campestris (strain 8004)</name>
    <dbReference type="NCBI Taxonomy" id="314565"/>
    <lineage>
        <taxon>Bacteria</taxon>
        <taxon>Pseudomonadati</taxon>
        <taxon>Pseudomonadota</taxon>
        <taxon>Gammaproteobacteria</taxon>
        <taxon>Lysobacterales</taxon>
        <taxon>Lysobacteraceae</taxon>
        <taxon>Xanthomonas</taxon>
    </lineage>
</organism>
<comment type="function">
    <text evidence="1">Catalyzes the cross-linking of a glutamate residue and a tyrosine residue in the PqqA protein as part of the biosynthesis of pyrroloquinoline quinone (PQQ).</text>
</comment>
<comment type="catalytic activity">
    <reaction evidence="1">
        <text>[PQQ precursor protein] + S-adenosyl-L-methionine = E-Y cross-linked-[PQQ precursor protein] + 5'-deoxyadenosine + L-methionine + H(+)</text>
        <dbReference type="Rhea" id="RHEA:56836"/>
        <dbReference type="Rhea" id="RHEA-COMP:14800"/>
        <dbReference type="Rhea" id="RHEA-COMP:14801"/>
        <dbReference type="ChEBI" id="CHEBI:15378"/>
        <dbReference type="ChEBI" id="CHEBI:17319"/>
        <dbReference type="ChEBI" id="CHEBI:57844"/>
        <dbReference type="ChEBI" id="CHEBI:59789"/>
        <dbReference type="ChEBI" id="CHEBI:141026"/>
        <dbReference type="ChEBI" id="CHEBI:141027"/>
        <dbReference type="EC" id="1.21.98.4"/>
    </reaction>
</comment>
<comment type="cofactor">
    <cofactor evidence="1">
        <name>[4Fe-4S] cluster</name>
        <dbReference type="ChEBI" id="CHEBI:49883"/>
    </cofactor>
    <text evidence="1">Binds 1 [4Fe-4S] cluster. The cluster is coordinated with 3 cysteines and an exchangeable S-adenosyl-L-methionine.</text>
</comment>
<comment type="pathway">
    <text evidence="1">Cofactor biosynthesis; pyrroloquinoline quinone biosynthesis.</text>
</comment>
<comment type="subunit">
    <text evidence="1">Interacts with PqqD. The interaction is necessary for activity of PqqE.</text>
</comment>
<comment type="similarity">
    <text evidence="1">Belongs to the radical SAM superfamily. PqqE family.</text>
</comment>